<organism>
    <name type="scientific">Cronobacter sakazakii (strain ATCC BAA-894)</name>
    <name type="common">Enterobacter sakazakii</name>
    <dbReference type="NCBI Taxonomy" id="290339"/>
    <lineage>
        <taxon>Bacteria</taxon>
        <taxon>Pseudomonadati</taxon>
        <taxon>Pseudomonadota</taxon>
        <taxon>Gammaproteobacteria</taxon>
        <taxon>Enterobacterales</taxon>
        <taxon>Enterobacteriaceae</taxon>
        <taxon>Cronobacter</taxon>
    </lineage>
</organism>
<sequence>MAPDIQRVKAFLLDLQDRICQQLSAVDGDDFVEDAWQREGGGGGRSRVLRDGVVFEQAGVNFSHVHGDAMPASATAHRPELAGRSFEAMGVSLVVHPRNPYVPTSHANVRFFIAEKPGADPVWWFGGGFDLTPFYGFEEDAVHWHRTARDLCAPFGDDVYPRYKKWCDDYFYLKHRQEARGIGGLFFDDLNTPDFDTCFAFMQAVGDGYLNAYLPIVERRKTLPWGEREREFQLYRRGRYVEFNLVWDRGTLFGLQTGGRTESILMSMPPLVRWEYGYQPEENSPEAALYRDFLPVRDWVK</sequence>
<comment type="function">
    <text evidence="1">Involved in the heme biosynthesis. Catalyzes the aerobic oxidative decarboxylation of propionate groups of rings A and B of coproporphyrinogen-III to yield the vinyl groups in protoporphyrinogen-IX.</text>
</comment>
<comment type="catalytic activity">
    <reaction evidence="1">
        <text>coproporphyrinogen III + O2 + 2 H(+) = protoporphyrinogen IX + 2 CO2 + 2 H2O</text>
        <dbReference type="Rhea" id="RHEA:18257"/>
        <dbReference type="ChEBI" id="CHEBI:15377"/>
        <dbReference type="ChEBI" id="CHEBI:15378"/>
        <dbReference type="ChEBI" id="CHEBI:15379"/>
        <dbReference type="ChEBI" id="CHEBI:16526"/>
        <dbReference type="ChEBI" id="CHEBI:57307"/>
        <dbReference type="ChEBI" id="CHEBI:57309"/>
        <dbReference type="EC" id="1.3.3.3"/>
    </reaction>
</comment>
<comment type="cofactor">
    <cofactor evidence="1">
        <name>a divalent metal cation</name>
        <dbReference type="ChEBI" id="CHEBI:60240"/>
    </cofactor>
</comment>
<comment type="pathway">
    <text evidence="1">Porphyrin-containing compound metabolism; protoporphyrin-IX biosynthesis; protoporphyrinogen-IX from coproporphyrinogen-III (O2 route): step 1/1.</text>
</comment>
<comment type="subunit">
    <text evidence="1">Homodimer.</text>
</comment>
<comment type="subcellular location">
    <subcellularLocation>
        <location evidence="1">Cytoplasm</location>
    </subcellularLocation>
</comment>
<comment type="similarity">
    <text evidence="1">Belongs to the aerobic coproporphyrinogen-III oxidase family.</text>
</comment>
<protein>
    <recommendedName>
        <fullName evidence="1">Oxygen-dependent coproporphyrinogen-III oxidase</fullName>
        <shortName evidence="1">CPO</shortName>
        <shortName evidence="1">Coprogen oxidase</shortName>
        <shortName evidence="1">Coproporphyrinogenase</shortName>
        <ecNumber evidence="1">1.3.3.3</ecNumber>
    </recommendedName>
</protein>
<keyword id="KW-0963">Cytoplasm</keyword>
<keyword id="KW-0350">Heme biosynthesis</keyword>
<keyword id="KW-0479">Metal-binding</keyword>
<keyword id="KW-0560">Oxidoreductase</keyword>
<keyword id="KW-0627">Porphyrin biosynthesis</keyword>
<keyword id="KW-1185">Reference proteome</keyword>
<reference key="1">
    <citation type="journal article" date="2010" name="PLoS ONE">
        <title>Genome sequence of Cronobacter sakazakii BAA-894 and comparative genomic hybridization analysis with other Cronobacter species.</title>
        <authorList>
            <person name="Kucerova E."/>
            <person name="Clifton S.W."/>
            <person name="Xia X.Q."/>
            <person name="Long F."/>
            <person name="Porwollik S."/>
            <person name="Fulton L."/>
            <person name="Fronick C."/>
            <person name="Minx P."/>
            <person name="Kyung K."/>
            <person name="Warren W."/>
            <person name="Fulton R."/>
            <person name="Feng D."/>
            <person name="Wollam A."/>
            <person name="Shah N."/>
            <person name="Bhonagiri V."/>
            <person name="Nash W.E."/>
            <person name="Hallsworth-Pepin K."/>
            <person name="Wilson R.K."/>
            <person name="McClelland M."/>
            <person name="Forsythe S.J."/>
        </authorList>
    </citation>
    <scope>NUCLEOTIDE SEQUENCE [LARGE SCALE GENOMIC DNA]</scope>
    <source>
        <strain>ATCC BAA-894</strain>
    </source>
</reference>
<dbReference type="EC" id="1.3.3.3" evidence="1"/>
<dbReference type="EMBL" id="CP000783">
    <property type="protein sequence ID" value="ABU76090.1"/>
    <property type="molecule type" value="Genomic_DNA"/>
</dbReference>
<dbReference type="RefSeq" id="WP_012124090.1">
    <property type="nucleotide sequence ID" value="NC_009778.1"/>
</dbReference>
<dbReference type="SMR" id="A7MKX5"/>
<dbReference type="KEGG" id="esa:ESA_00813"/>
<dbReference type="PATRIC" id="fig|290339.8.peg.723"/>
<dbReference type="HOGENOM" id="CLU_026169_0_1_6"/>
<dbReference type="UniPathway" id="UPA00251">
    <property type="reaction ID" value="UER00322"/>
</dbReference>
<dbReference type="Proteomes" id="UP000000260">
    <property type="component" value="Chromosome"/>
</dbReference>
<dbReference type="GO" id="GO:0005737">
    <property type="term" value="C:cytoplasm"/>
    <property type="evidence" value="ECO:0007669"/>
    <property type="project" value="UniProtKB-SubCell"/>
</dbReference>
<dbReference type="GO" id="GO:0004109">
    <property type="term" value="F:coproporphyrinogen oxidase activity"/>
    <property type="evidence" value="ECO:0007669"/>
    <property type="project" value="UniProtKB-UniRule"/>
</dbReference>
<dbReference type="GO" id="GO:0046872">
    <property type="term" value="F:metal ion binding"/>
    <property type="evidence" value="ECO:0007669"/>
    <property type="project" value="UniProtKB-KW"/>
</dbReference>
<dbReference type="GO" id="GO:0042803">
    <property type="term" value="F:protein homodimerization activity"/>
    <property type="evidence" value="ECO:0000250"/>
    <property type="project" value="UniProtKB"/>
</dbReference>
<dbReference type="GO" id="GO:0006782">
    <property type="term" value="P:protoporphyrinogen IX biosynthetic process"/>
    <property type="evidence" value="ECO:0007669"/>
    <property type="project" value="UniProtKB-UniRule"/>
</dbReference>
<dbReference type="FunFam" id="3.40.1500.10:FF:000001">
    <property type="entry name" value="Oxygen-dependent coproporphyrinogen-III oxidase"/>
    <property type="match status" value="1"/>
</dbReference>
<dbReference type="Gene3D" id="3.40.1500.10">
    <property type="entry name" value="Coproporphyrinogen III oxidase, aerobic"/>
    <property type="match status" value="1"/>
</dbReference>
<dbReference type="HAMAP" id="MF_00333">
    <property type="entry name" value="Coprogen_oxidas"/>
    <property type="match status" value="1"/>
</dbReference>
<dbReference type="InterPro" id="IPR001260">
    <property type="entry name" value="Coprogen_oxidase_aer"/>
</dbReference>
<dbReference type="InterPro" id="IPR036406">
    <property type="entry name" value="Coprogen_oxidase_aer_sf"/>
</dbReference>
<dbReference type="InterPro" id="IPR018375">
    <property type="entry name" value="Coprogen_oxidase_CS"/>
</dbReference>
<dbReference type="NCBIfam" id="NF003727">
    <property type="entry name" value="PRK05330.1"/>
    <property type="match status" value="1"/>
</dbReference>
<dbReference type="PANTHER" id="PTHR10755">
    <property type="entry name" value="COPROPORPHYRINOGEN III OXIDASE, MITOCHONDRIAL"/>
    <property type="match status" value="1"/>
</dbReference>
<dbReference type="PANTHER" id="PTHR10755:SF0">
    <property type="entry name" value="OXYGEN-DEPENDENT COPROPORPHYRINOGEN-III OXIDASE, MITOCHONDRIAL"/>
    <property type="match status" value="1"/>
</dbReference>
<dbReference type="Pfam" id="PF01218">
    <property type="entry name" value="Coprogen_oxidas"/>
    <property type="match status" value="1"/>
</dbReference>
<dbReference type="PIRSF" id="PIRSF000166">
    <property type="entry name" value="Coproporphyri_ox"/>
    <property type="match status" value="1"/>
</dbReference>
<dbReference type="PRINTS" id="PR00073">
    <property type="entry name" value="COPRGNOXDASE"/>
</dbReference>
<dbReference type="SUPFAM" id="SSF102886">
    <property type="entry name" value="Coproporphyrinogen III oxidase"/>
    <property type="match status" value="1"/>
</dbReference>
<dbReference type="PROSITE" id="PS01021">
    <property type="entry name" value="COPROGEN_OXIDASE"/>
    <property type="match status" value="1"/>
</dbReference>
<evidence type="ECO:0000255" key="1">
    <source>
        <dbReference type="HAMAP-Rule" id="MF_00333"/>
    </source>
</evidence>
<proteinExistence type="inferred from homology"/>
<feature type="chain" id="PRO_1000019470" description="Oxygen-dependent coproporphyrinogen-III oxidase">
    <location>
        <begin position="1"/>
        <end position="301"/>
    </location>
</feature>
<feature type="region of interest" description="Important for dimerization" evidence="1">
    <location>
        <begin position="240"/>
        <end position="275"/>
    </location>
</feature>
<feature type="active site" description="Proton donor" evidence="1">
    <location>
        <position position="106"/>
    </location>
</feature>
<feature type="binding site" evidence="1">
    <location>
        <position position="92"/>
    </location>
    <ligand>
        <name>substrate</name>
    </ligand>
</feature>
<feature type="binding site" evidence="1">
    <location>
        <position position="96"/>
    </location>
    <ligand>
        <name>a divalent metal cation</name>
        <dbReference type="ChEBI" id="CHEBI:60240"/>
    </ligand>
</feature>
<feature type="binding site" evidence="1">
    <location>
        <position position="106"/>
    </location>
    <ligand>
        <name>a divalent metal cation</name>
        <dbReference type="ChEBI" id="CHEBI:60240"/>
    </ligand>
</feature>
<feature type="binding site" evidence="1">
    <location>
        <begin position="108"/>
        <end position="110"/>
    </location>
    <ligand>
        <name>substrate</name>
    </ligand>
</feature>
<feature type="binding site" evidence="1">
    <location>
        <position position="145"/>
    </location>
    <ligand>
        <name>a divalent metal cation</name>
        <dbReference type="ChEBI" id="CHEBI:60240"/>
    </ligand>
</feature>
<feature type="binding site" evidence="1">
    <location>
        <position position="175"/>
    </location>
    <ligand>
        <name>a divalent metal cation</name>
        <dbReference type="ChEBI" id="CHEBI:60240"/>
    </ligand>
</feature>
<feature type="binding site" evidence="1">
    <location>
        <begin position="258"/>
        <end position="260"/>
    </location>
    <ligand>
        <name>substrate</name>
    </ligand>
</feature>
<feature type="site" description="Important for dimerization" evidence="1">
    <location>
        <position position="175"/>
    </location>
</feature>
<name>HEM6_CROS8</name>
<accession>A7MKX5</accession>
<gene>
    <name evidence="1" type="primary">hemF</name>
    <name type="ordered locus">ESA_00813</name>
</gene>